<comment type="function">
    <text evidence="5 6 7">Ubiquitin-like protein that plays a role in cell proliferation and sister chromatid cohesion by associating with spliceosomal proteins (PubMed:25092792). Participates thereby in pre-mRNA splicing by maintaining spliceosome integrity. Promotes the functional integrity of the Fanconi anemia DNA repair pathway by interacting with FANCI component and subsequently mediating the formation of FANCI homodimers (PubMed:25862789). Also plays a protective role against ER stress-induced apoptosis (PubMed:37315790).</text>
</comment>
<comment type="subunit">
    <text evidence="2 3 4 5 6">Interacts with CLK1, CLK3 and CLK4. Interacts with coilin/COIL (PubMed:23726919). Interacts with spliceosome components SART1 and EFTUD2 (PubMed:25092792). Interacts with FANCI; this interaction promotes FANCI dimerization (PubMed:25862789).</text>
</comment>
<comment type="interaction">
    <interactant intactId="EBI-607755">
        <id>Q9BZL1</id>
    </interactant>
    <interactant intactId="EBI-10181188">
        <id>Q8N7W2-2</id>
        <label>BEND7</label>
    </interactant>
    <organismsDiffer>false</organismsDiffer>
    <experiments>3</experiments>
</comment>
<comment type="interaction">
    <interactant intactId="EBI-607755">
        <id>Q9BZL1</id>
    </interactant>
    <interactant intactId="EBI-2653038">
        <id>Q9NQY0</id>
        <label>BIN3</label>
    </interactant>
    <organismsDiffer>false</organismsDiffer>
    <experiments>3</experiments>
</comment>
<comment type="interaction">
    <interactant intactId="EBI-607755">
        <id>Q9BZL1</id>
    </interactant>
    <interactant intactId="EBI-11536642">
        <id>Q9BXJ1-2</id>
        <label>C1QTNF1</label>
    </interactant>
    <organismsDiffer>false</organismsDiffer>
    <experiments>3</experiments>
</comment>
<comment type="interaction">
    <interactant intactId="EBI-607755">
        <id>Q9BZL1</id>
    </interactant>
    <interactant intactId="EBI-10181422">
        <id>A0A1B0GWI1</id>
        <label>CCDC196</label>
    </interactant>
    <organismsDiffer>false</organismsDiffer>
    <experiments>3</experiments>
</comment>
<comment type="interaction">
    <interactant intactId="EBI-607755">
        <id>Q9BZL1</id>
    </interactant>
    <interactant intactId="EBI-12920646">
        <id>Q9BUN5-3</id>
        <label>CCDC28B</label>
    </interactant>
    <organismsDiffer>false</organismsDiffer>
    <experiments>3</experiments>
</comment>
<comment type="interaction">
    <interactant intactId="EBI-607755">
        <id>Q9BZL1</id>
    </interactant>
    <interactant intactId="EBI-12261896">
        <id>Q5T4B2</id>
        <label>CERCAM</label>
    </interactant>
    <organismsDiffer>false</organismsDiffer>
    <experiments>3</experiments>
</comment>
<comment type="interaction">
    <interactant intactId="EBI-607755">
        <id>Q9BZL1</id>
    </interactant>
    <interactant intactId="EBI-1188472">
        <id>P78358</id>
        <label>CTAG1B</label>
    </interactant>
    <organismsDiffer>false</organismsDiffer>
    <experiments>3</experiments>
</comment>
<comment type="interaction">
    <interactant intactId="EBI-607755">
        <id>Q9BZL1</id>
    </interactant>
    <interactant intactId="EBI-742802">
        <id>Q9Y247</id>
        <label>FAM50B</label>
    </interactant>
    <organismsDiffer>false</organismsDiffer>
    <experiments>3</experiments>
</comment>
<comment type="interaction">
    <interactant intactId="EBI-607755">
        <id>Q9BZL1</id>
    </interactant>
    <interactant intactId="EBI-17857617">
        <id>Q5JQS6</id>
        <label>GCSAML</label>
    </interactant>
    <organismsDiffer>false</organismsDiffer>
    <experiments>3</experiments>
</comment>
<comment type="interaction">
    <interactant intactId="EBI-607755">
        <id>Q9BZL1</id>
    </interactant>
    <interactant intactId="EBI-8470369">
        <id>Q9UBX0</id>
        <label>HESX1</label>
    </interactant>
    <organismsDiffer>false</organismsDiffer>
    <experiments>3</experiments>
</comment>
<comment type="interaction">
    <interactant intactId="EBI-607755">
        <id>Q9BZL1</id>
    </interactant>
    <interactant intactId="EBI-743438">
        <id>Q8IV36</id>
        <label>HID1</label>
    </interactant>
    <organismsDiffer>false</organismsDiffer>
    <experiments>3</experiments>
</comment>
<comment type="interaction">
    <interactant intactId="EBI-607755">
        <id>Q9BZL1</id>
    </interactant>
    <interactant intactId="EBI-7261162">
        <id>Q9UGU5</id>
        <label>HMGXB4</label>
    </interactant>
    <organismsDiffer>false</organismsDiffer>
    <experiments>3</experiments>
</comment>
<comment type="interaction">
    <interactant intactId="EBI-607755">
        <id>Q9BZL1</id>
    </interactant>
    <interactant intactId="EBI-740785">
        <id>P49639</id>
        <label>HOXA1</label>
    </interactant>
    <organismsDiffer>false</organismsDiffer>
    <experiments>3</experiments>
</comment>
<comment type="interaction">
    <interactant intactId="EBI-607755">
        <id>Q9BZL1</id>
    </interactant>
    <interactant intactId="EBI-10171774">
        <id>P60410</id>
        <label>KRTAP10-8</label>
    </interactant>
    <organismsDiffer>false</organismsDiffer>
    <experiments>3</experiments>
</comment>
<comment type="interaction">
    <interactant intactId="EBI-607755">
        <id>Q9BZL1</id>
    </interactant>
    <interactant intactId="EBI-10241252">
        <id>Q3SY46</id>
        <label>KRTAP13-3</label>
    </interactant>
    <organismsDiffer>false</organismsDiffer>
    <experiments>3</experiments>
</comment>
<comment type="interaction">
    <interactant intactId="EBI-607755">
        <id>Q9BZL1</id>
    </interactant>
    <interactant intactId="EBI-726510">
        <id>Q96BZ8</id>
        <label>LENG1</label>
    </interactant>
    <organismsDiffer>false</organismsDiffer>
    <experiments>3</experiments>
</comment>
<comment type="interaction">
    <interactant intactId="EBI-607755">
        <id>Q9BZL1</id>
    </interactant>
    <interactant intactId="EBI-12516603">
        <id>Q8WWY6</id>
        <label>MBD3L1</label>
    </interactant>
    <organismsDiffer>false</organismsDiffer>
    <experiments>3</experiments>
</comment>
<comment type="interaction">
    <interactant intactId="EBI-607755">
        <id>Q9BZL1</id>
    </interactant>
    <interactant intactId="EBI-11061759">
        <id>P23511-2</id>
        <label>NFYA</label>
    </interactant>
    <organismsDiffer>false</organismsDiffer>
    <experiments>3</experiments>
</comment>
<comment type="interaction">
    <interactant intactId="EBI-607755">
        <id>Q9BZL1</id>
    </interactant>
    <interactant intactId="EBI-744871">
        <id>O00746</id>
        <label>NME4</label>
    </interactant>
    <organismsDiffer>false</organismsDiffer>
    <experiments>3</experiments>
</comment>
<comment type="interaction">
    <interactant intactId="EBI-607755">
        <id>Q9BZL1</id>
    </interactant>
    <interactant intactId="EBI-10311735">
        <id>Q9NQ35</id>
        <label>NRIP3</label>
    </interactant>
    <organismsDiffer>false</organismsDiffer>
    <experiments>3</experiments>
</comment>
<comment type="interaction">
    <interactant intactId="EBI-607755">
        <id>Q9BZL1</id>
    </interactant>
    <interactant intactId="EBI-10240813">
        <id>Q3KNR5</id>
        <label>PAX4</label>
    </interactant>
    <organismsDiffer>false</organismsDiffer>
    <experiments>3</experiments>
</comment>
<comment type="interaction">
    <interactant intactId="EBI-607755">
        <id>Q9BZL1</id>
    </interactant>
    <interactant intactId="EBI-717068">
        <id>Q96KR7</id>
        <label>PHACTR3</label>
    </interactant>
    <organismsDiffer>false</organismsDiffer>
    <experiments>3</experiments>
</comment>
<comment type="interaction">
    <interactant intactId="EBI-607755">
        <id>Q9BZL1</id>
    </interactant>
    <interactant intactId="EBI-721782">
        <id>Q96BK5</id>
        <label>PINX1</label>
    </interactant>
    <organismsDiffer>false</organismsDiffer>
    <experiments>3</experiments>
</comment>
<comment type="interaction">
    <interactant intactId="EBI-607755">
        <id>Q9BZL1</id>
    </interactant>
    <interactant intactId="EBI-745545">
        <id>Q9NR22</id>
        <label>PRMT8</label>
    </interactant>
    <organismsDiffer>false</organismsDiffer>
    <experiments>3</experiments>
</comment>
<comment type="interaction">
    <interactant intactId="EBI-607755">
        <id>Q9BZL1</id>
    </interactant>
    <interactant intactId="EBI-741630">
        <id>Q9UL46</id>
        <label>PSME2</label>
    </interactant>
    <organismsDiffer>false</organismsDiffer>
    <experiments>3</experiments>
</comment>
<comment type="interaction">
    <interactant intactId="EBI-607755">
        <id>Q9BZL1</id>
    </interactant>
    <interactant intactId="EBI-607761">
        <id>O43290</id>
        <label>SART1</label>
    </interactant>
    <organismsDiffer>false</organismsDiffer>
    <experiments>4</experiments>
</comment>
<comment type="interaction">
    <interactant intactId="EBI-607755">
        <id>Q9BZL1</id>
    </interactant>
    <interactant intactId="EBI-11525407">
        <id>Q15019-3</id>
        <label>SEPTIN2</label>
    </interactant>
    <organismsDiffer>false</organismsDiffer>
    <experiments>3</experiments>
</comment>
<comment type="interaction">
    <interactant intactId="EBI-607755">
        <id>Q9BZL1</id>
    </interactant>
    <interactant intactId="EBI-748621">
        <id>Q9UJW9</id>
        <label>SERTAD3</label>
    </interactant>
    <organismsDiffer>false</organismsDiffer>
    <experiments>4</experiments>
</comment>
<comment type="interaction">
    <interactant intactId="EBI-607755">
        <id>Q9BZL1</id>
    </interactant>
    <interactant intactId="EBI-12223157">
        <id>Q15637-4</id>
        <label>SF1</label>
    </interactant>
    <organismsDiffer>false</organismsDiffer>
    <experiments>3</experiments>
</comment>
<comment type="interaction">
    <interactant intactId="EBI-607755">
        <id>Q9BZL1</id>
    </interactant>
    <interactant intactId="EBI-750494">
        <id>P49901</id>
        <label>SMCP</label>
    </interactant>
    <organismsDiffer>false</organismsDiffer>
    <experiments>3</experiments>
</comment>
<comment type="interaction">
    <interactant intactId="EBI-607755">
        <id>Q9BZL1</id>
    </interactant>
    <interactant intactId="EBI-17197485">
        <id>Q9NS25</id>
        <label>SPANXB1</label>
    </interactant>
    <organismsDiffer>false</organismsDiffer>
    <experiments>3</experiments>
</comment>
<comment type="interaction">
    <interactant intactId="EBI-607755">
        <id>Q9BZL1</id>
    </interactant>
    <interactant intactId="EBI-11995806">
        <id>Q9H0A9-2</id>
        <label>SPATC1L</label>
    </interactant>
    <organismsDiffer>false</organismsDiffer>
    <experiments>3</experiments>
</comment>
<comment type="interaction">
    <interactant intactId="EBI-607755">
        <id>Q9BZL1</id>
    </interactant>
    <interactant intactId="EBI-12833746">
        <id>Q5T0J7-2</id>
        <label>TEX35</label>
    </interactant>
    <organismsDiffer>false</organismsDiffer>
    <experiments>3</experiments>
</comment>
<comment type="interaction">
    <interactant intactId="EBI-607755">
        <id>Q9BZL1</id>
    </interactant>
    <interactant intactId="EBI-17438286">
        <id>Q8WTV1</id>
        <label>THAP3</label>
    </interactant>
    <organismsDiffer>false</organismsDiffer>
    <experiments>3</experiments>
</comment>
<comment type="interaction">
    <interactant intactId="EBI-607755">
        <id>Q9BZL1</id>
    </interactant>
    <interactant intactId="EBI-11741437">
        <id>Q08117-2</id>
        <label>TLE5</label>
    </interactant>
    <organismsDiffer>false</organismsDiffer>
    <experiments>3</experiments>
</comment>
<comment type="interaction">
    <interactant intactId="EBI-607755">
        <id>Q9BZL1</id>
    </interactant>
    <interactant intactId="EBI-11523450">
        <id>Q9HCM9-2</id>
        <label>TRIM39</label>
    </interactant>
    <organismsDiffer>false</organismsDiffer>
    <experiments>3</experiments>
</comment>
<comment type="interaction">
    <interactant intactId="EBI-607755">
        <id>Q9BZL1</id>
    </interactant>
    <interactant intactId="EBI-7705033">
        <id>Q9BRX9</id>
        <label>WDR83</label>
    </interactant>
    <organismsDiffer>false</organismsDiffer>
    <experiments>2</experiments>
</comment>
<comment type="interaction">
    <interactant intactId="EBI-607755">
        <id>Q9BZL1</id>
    </interactant>
    <interactant intactId="EBI-12224489">
        <id>Q8N8Y5</id>
        <label>ZFP41</label>
    </interactant>
    <organismsDiffer>false</organismsDiffer>
    <experiments>3</experiments>
</comment>
<comment type="interaction">
    <interactant intactId="EBI-607755">
        <id>Q9BZL1</id>
    </interactant>
    <interactant intactId="EBI-2555767">
        <id>Q15973</id>
        <label>ZNF124</label>
    </interactant>
    <organismsDiffer>false</organismsDiffer>
    <experiments>3</experiments>
</comment>
<comment type="interaction">
    <interactant intactId="EBI-607755">
        <id>Q9BZL1</id>
    </interactant>
    <interactant intactId="EBI-6255994">
        <id>Q5T7W0</id>
        <label>ZNF618</label>
    </interactant>
    <organismsDiffer>false</organismsDiffer>
    <experiments>3</experiments>
</comment>
<comment type="subcellular location">
    <subcellularLocation>
        <location evidence="1 4 7">Cytoplasm</location>
    </subcellularLocation>
    <subcellularLocation>
        <location evidence="4 7">Nucleus</location>
    </subcellularLocation>
    <subcellularLocation>
        <location evidence="7">Nucleus</location>
        <location evidence="7">Cajal body</location>
    </subcellularLocation>
</comment>
<comment type="tissue specificity">
    <text evidence="1">Ubiquitous. Highest level of expression in heart, skeletal muscle, kidney, liver, iris and lymphoblasts.</text>
</comment>
<comment type="induction">
    <text evidence="7">Depleted by ER stress-induced mediated by the ubiquitin-independent proteasome system independent of transcriptional regulation and downstream of PERK activation.</text>
</comment>
<dbReference type="EMBL" id="AF313915">
    <property type="protein sequence ID" value="AAK14178.1"/>
    <property type="molecule type" value="mRNA"/>
</dbReference>
<dbReference type="EMBL" id="BT007355">
    <property type="protein sequence ID" value="AAP36019.1"/>
    <property type="molecule type" value="mRNA"/>
</dbReference>
<dbReference type="EMBL" id="BC007053">
    <property type="protein sequence ID" value="AAH07053.1"/>
    <property type="molecule type" value="mRNA"/>
</dbReference>
<dbReference type="EMBL" id="BC110839">
    <property type="protein sequence ID" value="AAI10840.1"/>
    <property type="molecule type" value="mRNA"/>
</dbReference>
<dbReference type="CCDS" id="CCDS12219.1"/>
<dbReference type="RefSeq" id="NP_001041706.1">
    <property type="nucleotide sequence ID" value="NM_001048241.3"/>
</dbReference>
<dbReference type="RefSeq" id="NP_077268.1">
    <property type="nucleotide sequence ID" value="NM_024292.4"/>
</dbReference>
<dbReference type="RefSeq" id="XP_054177631.1">
    <property type="nucleotide sequence ID" value="XM_054321656.1"/>
</dbReference>
<dbReference type="PDB" id="1P0R">
    <property type="method" value="NMR"/>
    <property type="chains" value="A=1-73"/>
</dbReference>
<dbReference type="PDB" id="4PYU">
    <property type="method" value="X-ray"/>
    <property type="resolution" value="2.00 A"/>
    <property type="chains" value="A/B/G/K/O/S=1-73"/>
</dbReference>
<dbReference type="PDB" id="6AHD">
    <property type="method" value="EM"/>
    <property type="resolution" value="3.80 A"/>
    <property type="chains" value="A0=1-73"/>
</dbReference>
<dbReference type="PDB" id="7AAV">
    <property type="method" value="EM"/>
    <property type="resolution" value="4.20 A"/>
    <property type="chains" value="q=1-73"/>
</dbReference>
<dbReference type="PDB" id="7ABF">
    <property type="method" value="EM"/>
    <property type="resolution" value="3.90 A"/>
    <property type="chains" value="q=1-73"/>
</dbReference>
<dbReference type="PDB" id="7ABG">
    <property type="method" value="EM"/>
    <property type="resolution" value="7.80 A"/>
    <property type="chains" value="q=1-73"/>
</dbReference>
<dbReference type="PDB" id="7ABI">
    <property type="method" value="EM"/>
    <property type="resolution" value="8.00 A"/>
    <property type="chains" value="q=1-73"/>
</dbReference>
<dbReference type="PDB" id="8H6K">
    <property type="method" value="EM"/>
    <property type="resolution" value="2.70 A"/>
    <property type="chains" value="4M=1-73"/>
</dbReference>
<dbReference type="PDB" id="8Q7N">
    <property type="method" value="EM"/>
    <property type="resolution" value="3.10 A"/>
    <property type="chains" value="s=1-73"/>
</dbReference>
<dbReference type="PDB" id="8QO9">
    <property type="method" value="EM"/>
    <property type="resolution" value="5.29 A"/>
    <property type="chains" value="s=1-73"/>
</dbReference>
<dbReference type="PDBsum" id="1P0R"/>
<dbReference type="PDBsum" id="4PYU"/>
<dbReference type="PDBsum" id="6AHD"/>
<dbReference type="PDBsum" id="7AAV"/>
<dbReference type="PDBsum" id="7ABF"/>
<dbReference type="PDBsum" id="7ABG"/>
<dbReference type="PDBsum" id="7ABI"/>
<dbReference type="PDBsum" id="8H6K"/>
<dbReference type="PDBsum" id="8Q7N"/>
<dbReference type="PDBsum" id="8QO9"/>
<dbReference type="BMRB" id="Q9BZL1"/>
<dbReference type="EMDB" id="EMD-11693"/>
<dbReference type="EMDB" id="EMD-11694"/>
<dbReference type="EMDB" id="EMD-11695"/>
<dbReference type="EMDB" id="EMD-11697"/>
<dbReference type="EMDB" id="EMD-18225"/>
<dbReference type="EMDB" id="EMD-18529"/>
<dbReference type="EMDB" id="EMD-34507"/>
<dbReference type="EMDB" id="EMD-9624"/>
<dbReference type="SMR" id="Q9BZL1"/>
<dbReference type="BioGRID" id="121872">
    <property type="interactions" value="86"/>
</dbReference>
<dbReference type="CORUM" id="Q9BZL1"/>
<dbReference type="FunCoup" id="Q9BZL1">
    <property type="interactions" value="2609"/>
</dbReference>
<dbReference type="IntAct" id="Q9BZL1">
    <property type="interactions" value="58"/>
</dbReference>
<dbReference type="MINT" id="Q9BZL1"/>
<dbReference type="STRING" id="9606.ENSP00000351492"/>
<dbReference type="GlyGen" id="Q9BZL1">
    <property type="glycosylation" value="1 site, 1 O-linked glycan (1 site)"/>
</dbReference>
<dbReference type="iPTMnet" id="Q9BZL1"/>
<dbReference type="MetOSite" id="Q9BZL1"/>
<dbReference type="PhosphoSitePlus" id="Q9BZL1"/>
<dbReference type="BioMuta" id="UBL5"/>
<dbReference type="DMDM" id="52082771"/>
<dbReference type="jPOST" id="Q9BZL1"/>
<dbReference type="MassIVE" id="Q9BZL1"/>
<dbReference type="PaxDb" id="9606-ENSP00000351492"/>
<dbReference type="PeptideAtlas" id="Q9BZL1"/>
<dbReference type="ProteomicsDB" id="79866"/>
<dbReference type="Pumba" id="Q9BZL1"/>
<dbReference type="Antibodypedia" id="25091">
    <property type="antibodies" value="123 antibodies from 20 providers"/>
</dbReference>
<dbReference type="DNASU" id="59286"/>
<dbReference type="Ensembl" id="ENST00000358666.7">
    <property type="protein sequence ID" value="ENSP00000351492.2"/>
    <property type="gene ID" value="ENSG00000198258.11"/>
</dbReference>
<dbReference type="Ensembl" id="ENST00000586895.6">
    <property type="protein sequence ID" value="ENSP00000468656.1"/>
    <property type="gene ID" value="ENSG00000198258.11"/>
</dbReference>
<dbReference type="Ensembl" id="ENST00000590068.1">
    <property type="protein sequence ID" value="ENSP00000466910.1"/>
    <property type="gene ID" value="ENSG00000198258.11"/>
</dbReference>
<dbReference type="GeneID" id="59286"/>
<dbReference type="KEGG" id="hsa:59286"/>
<dbReference type="MANE-Select" id="ENST00000586895.6">
    <property type="protein sequence ID" value="ENSP00000468656.1"/>
    <property type="RefSeq nucleotide sequence ID" value="NM_001048241.3"/>
    <property type="RefSeq protein sequence ID" value="NP_001041706.1"/>
</dbReference>
<dbReference type="UCSC" id="uc002mmi.3">
    <property type="organism name" value="human"/>
</dbReference>
<dbReference type="AGR" id="HGNC:13736"/>
<dbReference type="CTD" id="59286"/>
<dbReference type="DisGeNET" id="59286"/>
<dbReference type="GeneCards" id="UBL5"/>
<dbReference type="HGNC" id="HGNC:13736">
    <property type="gene designation" value="UBL5"/>
</dbReference>
<dbReference type="HPA" id="ENSG00000198258">
    <property type="expression patterns" value="Low tissue specificity"/>
</dbReference>
<dbReference type="MIM" id="606849">
    <property type="type" value="gene"/>
</dbReference>
<dbReference type="neXtProt" id="NX_Q9BZL1"/>
<dbReference type="OpenTargets" id="ENSG00000198258"/>
<dbReference type="PharmGKB" id="PA37805"/>
<dbReference type="VEuPathDB" id="HostDB:ENSG00000198258"/>
<dbReference type="eggNOG" id="KOG3493">
    <property type="taxonomic scope" value="Eukaryota"/>
</dbReference>
<dbReference type="GeneTree" id="ENSGT00390000001945"/>
<dbReference type="HOGENOM" id="CLU_156193_2_0_1"/>
<dbReference type="InParanoid" id="Q9BZL1"/>
<dbReference type="OMA" id="GMSLEMQ"/>
<dbReference type="OrthoDB" id="9471256at2759"/>
<dbReference type="PAN-GO" id="Q9BZL1">
    <property type="GO annotations" value="5 GO annotations based on evolutionary models"/>
</dbReference>
<dbReference type="PhylomeDB" id="Q9BZL1"/>
<dbReference type="PathwayCommons" id="Q9BZL1"/>
<dbReference type="Reactome" id="R-HSA-72163">
    <property type="pathway name" value="mRNA Splicing - Major Pathway"/>
</dbReference>
<dbReference type="SignaLink" id="Q9BZL1"/>
<dbReference type="BioGRID-ORCS" id="59286">
    <property type="hits" value="848 hits in 1151 CRISPR screens"/>
</dbReference>
<dbReference type="CD-CODE" id="DEE660B4">
    <property type="entry name" value="Stress granule"/>
</dbReference>
<dbReference type="ChiTaRS" id="UBL5">
    <property type="organism name" value="human"/>
</dbReference>
<dbReference type="EvolutionaryTrace" id="Q9BZL1"/>
<dbReference type="GeneWiki" id="UBL5"/>
<dbReference type="GenomeRNAi" id="59286"/>
<dbReference type="Pharos" id="Q9BZL1">
    <property type="development level" value="Tbio"/>
</dbReference>
<dbReference type="PRO" id="PR:Q9BZL1"/>
<dbReference type="Proteomes" id="UP000005640">
    <property type="component" value="Chromosome 19"/>
</dbReference>
<dbReference type="RNAct" id="Q9BZL1">
    <property type="molecule type" value="protein"/>
</dbReference>
<dbReference type="Bgee" id="ENSG00000198258">
    <property type="expression patterns" value="Expressed in adenohypophysis and 206 other cell types or tissues"/>
</dbReference>
<dbReference type="ExpressionAtlas" id="Q9BZL1">
    <property type="expression patterns" value="baseline and differential"/>
</dbReference>
<dbReference type="GO" id="GO:0015030">
    <property type="term" value="C:Cajal body"/>
    <property type="evidence" value="ECO:0007669"/>
    <property type="project" value="UniProtKB-SubCell"/>
</dbReference>
<dbReference type="GO" id="GO:0005737">
    <property type="term" value="C:cytoplasm"/>
    <property type="evidence" value="ECO:0000314"/>
    <property type="project" value="UniProtKB"/>
</dbReference>
<dbReference type="GO" id="GO:0005654">
    <property type="term" value="C:nucleoplasm"/>
    <property type="evidence" value="ECO:0000304"/>
    <property type="project" value="Reactome"/>
</dbReference>
<dbReference type="GO" id="GO:0005634">
    <property type="term" value="C:nucleus"/>
    <property type="evidence" value="ECO:0000318"/>
    <property type="project" value="GO_Central"/>
</dbReference>
<dbReference type="GO" id="GO:0031386">
    <property type="term" value="F:protein tag activity"/>
    <property type="evidence" value="ECO:0000318"/>
    <property type="project" value="GO_Central"/>
</dbReference>
<dbReference type="GO" id="GO:0000398">
    <property type="term" value="P:mRNA splicing, via spliceosome"/>
    <property type="evidence" value="ECO:0000318"/>
    <property type="project" value="GO_Central"/>
</dbReference>
<dbReference type="GO" id="GO:1903955">
    <property type="term" value="P:positive regulation of protein targeting to mitochondrion"/>
    <property type="evidence" value="ECO:0007001"/>
    <property type="project" value="ParkinsonsUK-UCL"/>
</dbReference>
<dbReference type="GO" id="GO:0036211">
    <property type="term" value="P:protein modification process"/>
    <property type="evidence" value="ECO:0000318"/>
    <property type="project" value="GO_Central"/>
</dbReference>
<dbReference type="CDD" id="cd01791">
    <property type="entry name" value="Ubl_UBL5"/>
    <property type="match status" value="1"/>
</dbReference>
<dbReference type="FunFam" id="3.10.20.90:FF:000052">
    <property type="entry name" value="Ubiquitin-like protein 5"/>
    <property type="match status" value="1"/>
</dbReference>
<dbReference type="Gene3D" id="3.10.20.90">
    <property type="entry name" value="Phosphatidylinositol 3-kinase Catalytic Subunit, Chain A, domain 1"/>
    <property type="match status" value="1"/>
</dbReference>
<dbReference type="IDEAL" id="IID00735"/>
<dbReference type="InterPro" id="IPR039732">
    <property type="entry name" value="Hub1/Ubl5"/>
</dbReference>
<dbReference type="InterPro" id="IPR000626">
    <property type="entry name" value="Ubiquitin-like_dom"/>
</dbReference>
<dbReference type="InterPro" id="IPR029071">
    <property type="entry name" value="Ubiquitin-like_domsf"/>
</dbReference>
<dbReference type="PANTHER" id="PTHR13042">
    <property type="entry name" value="UBIQUITIN-LIKE PROTEIN 5"/>
    <property type="match status" value="1"/>
</dbReference>
<dbReference type="Pfam" id="PF00240">
    <property type="entry name" value="ubiquitin"/>
    <property type="match status" value="1"/>
</dbReference>
<dbReference type="SUPFAM" id="SSF54236">
    <property type="entry name" value="Ubiquitin-like"/>
    <property type="match status" value="1"/>
</dbReference>
<proteinExistence type="evidence at protein level"/>
<keyword id="KW-0002">3D-structure</keyword>
<keyword id="KW-0963">Cytoplasm</keyword>
<keyword id="KW-0539">Nucleus</keyword>
<keyword id="KW-1267">Proteomics identification</keyword>
<keyword id="KW-1185">Reference proteome</keyword>
<keyword id="KW-0833">Ubl conjugation pathway</keyword>
<feature type="chain" id="PRO_0000114866" description="Ubiquitin-like protein 5">
    <location>
        <begin position="1"/>
        <end position="73"/>
    </location>
</feature>
<feature type="domain" description="Ubiquitin-like">
    <location>
        <begin position="1"/>
        <end position="73"/>
    </location>
</feature>
<feature type="mutagenesis site" description="Does not impair binding to SART1 nor its pre-mRNA splicing function." evidence="5">
    <original>D</original>
    <variation>A</variation>
    <location>
        <position position="22"/>
    </location>
</feature>
<feature type="strand" evidence="8">
    <location>
        <begin position="1"/>
        <end position="7"/>
    </location>
</feature>
<feature type="turn" evidence="9">
    <location>
        <begin position="9"/>
        <end position="12"/>
    </location>
</feature>
<feature type="strand" evidence="8">
    <location>
        <begin position="13"/>
        <end position="19"/>
    </location>
</feature>
<feature type="helix" evidence="8">
    <location>
        <begin position="24"/>
        <end position="34"/>
    </location>
</feature>
<feature type="helix" evidence="8">
    <location>
        <begin position="39"/>
        <end position="41"/>
    </location>
</feature>
<feature type="strand" evidence="8">
    <location>
        <begin position="42"/>
        <end position="46"/>
    </location>
</feature>
<feature type="turn" evidence="8">
    <location>
        <begin position="57"/>
        <end position="61"/>
    </location>
</feature>
<feature type="strand" evidence="8">
    <location>
        <begin position="67"/>
        <end position="72"/>
    </location>
</feature>
<accession>Q9BZL1</accession>
<accession>Q2NL89</accession>
<name>UBL5_HUMAN</name>
<gene>
    <name type="primary">UBL5</name>
</gene>
<protein>
    <recommendedName>
        <fullName>Ubiquitin-like protein 5</fullName>
    </recommendedName>
</protein>
<organism>
    <name type="scientific">Homo sapiens</name>
    <name type="common">Human</name>
    <dbReference type="NCBI Taxonomy" id="9606"/>
    <lineage>
        <taxon>Eukaryota</taxon>
        <taxon>Metazoa</taxon>
        <taxon>Chordata</taxon>
        <taxon>Craniata</taxon>
        <taxon>Vertebrata</taxon>
        <taxon>Euteleostomi</taxon>
        <taxon>Mammalia</taxon>
        <taxon>Eutheria</taxon>
        <taxon>Euarchontoglires</taxon>
        <taxon>Primates</taxon>
        <taxon>Haplorrhini</taxon>
        <taxon>Catarrhini</taxon>
        <taxon>Hominidae</taxon>
        <taxon>Homo</taxon>
    </lineage>
</organism>
<sequence length="73" mass="8547">MIEVVCNDRLGKKVRVKCNTDDTIGDLKKLIAAQTGTRWNKIVLKKWYTIFKDHVSLGDYEIHDGMNLELYYQ</sequence>
<reference key="1">
    <citation type="journal article" date="2001" name="Genomics">
        <title>Isolation of a ubiquitin-like (UBL5) gene from a screen identifying highly expressed and conserved iris genes.</title>
        <authorList>
            <person name="Friedman J.S."/>
            <person name="Koop B.F."/>
            <person name="Raymond V."/>
            <person name="Walter M.A."/>
        </authorList>
    </citation>
    <scope>NUCLEOTIDE SEQUENCE [MRNA]</scope>
    <scope>SUBCELLULAR LOCATION</scope>
    <scope>TISSUE SPECIFICITY</scope>
    <source>
        <tissue>Iris</tissue>
    </source>
</reference>
<reference key="2">
    <citation type="submission" date="2003-05" db="EMBL/GenBank/DDBJ databases">
        <title>Cloning of human full-length CDSs in BD Creator(TM) system donor vector.</title>
        <authorList>
            <person name="Kalnine N."/>
            <person name="Chen X."/>
            <person name="Rolfs A."/>
            <person name="Halleck A."/>
            <person name="Hines L."/>
            <person name="Eisenstein S."/>
            <person name="Koundinya M."/>
            <person name="Raphael J."/>
            <person name="Moreira D."/>
            <person name="Kelley T."/>
            <person name="LaBaer J."/>
            <person name="Lin Y."/>
            <person name="Phelan M."/>
            <person name="Farmer A."/>
        </authorList>
    </citation>
    <scope>NUCLEOTIDE SEQUENCE [LARGE SCALE MRNA]</scope>
</reference>
<reference key="3">
    <citation type="journal article" date="2004" name="Genome Res.">
        <title>The status, quality, and expansion of the NIH full-length cDNA project: the Mammalian Gene Collection (MGC).</title>
        <authorList>
            <consortium name="The MGC Project Team"/>
        </authorList>
    </citation>
    <scope>NUCLEOTIDE SEQUENCE [LARGE SCALE MRNA]</scope>
    <source>
        <tissue>Kidney</tissue>
        <tissue>Uterus</tissue>
    </source>
</reference>
<reference key="4">
    <citation type="journal article" date="2003" name="Biochem. Biophys. Res. Commun.">
        <title>Beacon interacts with cdc2/cdc28-like kinases.</title>
        <authorList>
            <person name="Kantham L."/>
            <person name="Kerr-Bayles L."/>
            <person name="Godde N."/>
            <person name="Quick M."/>
            <person name="Webb R."/>
            <person name="Sunderland T."/>
            <person name="Bond J."/>
            <person name="Walder K."/>
            <person name="Augert G."/>
            <person name="Collier G."/>
        </authorList>
    </citation>
    <scope>INTERACTION WITH CLK1; CLK3 AND CLK4</scope>
</reference>
<reference key="5">
    <citation type="journal article" date="2011" name="BMC Syst. Biol.">
        <title>Initial characterization of the human central proteome.</title>
        <authorList>
            <person name="Burkard T.R."/>
            <person name="Planyavsky M."/>
            <person name="Kaupe I."/>
            <person name="Breitwieser F.P."/>
            <person name="Buerckstuemmer T."/>
            <person name="Bennett K.L."/>
            <person name="Superti-Furga G."/>
            <person name="Colinge J."/>
        </authorList>
    </citation>
    <scope>IDENTIFICATION BY MASS SPECTROMETRY [LARGE SCALE ANALYSIS]</scope>
</reference>
<reference key="6">
    <citation type="journal article" date="2012" name="Proc. Natl. Acad. Sci. U.S.A.">
        <title>N-terminal acetylome analyses and functional insights of the N-terminal acetyltransferase NatB.</title>
        <authorList>
            <person name="Van Damme P."/>
            <person name="Lasa M."/>
            <person name="Polevoda B."/>
            <person name="Gazquez C."/>
            <person name="Elosegui-Artola A."/>
            <person name="Kim D.S."/>
            <person name="De Juan-Pardo E."/>
            <person name="Demeyer K."/>
            <person name="Hole K."/>
            <person name="Larrea E."/>
            <person name="Timmerman E."/>
            <person name="Prieto J."/>
            <person name="Arnesen T."/>
            <person name="Sherman F."/>
            <person name="Gevaert K."/>
            <person name="Aldabe R."/>
        </authorList>
    </citation>
    <scope>IDENTIFICATION BY MASS SPECTROMETRY [LARGE SCALE ANALYSIS]</scope>
</reference>
<reference key="7">
    <citation type="journal article" date="2013" name="Biochem. Biophys. Res. Commun.">
        <title>Human UBL5 protein interacts with coilin and meets the Cajal bodies.</title>
        <authorList>
            <person name="Sveda M."/>
            <person name="Castoralova M."/>
            <person name="Lipov J."/>
            <person name="Ruml T."/>
            <person name="Knejzlik Z."/>
        </authorList>
    </citation>
    <scope>SUBCELLULAR LOCATION</scope>
    <scope>INTERACTION WITH COILIN/COIL</scope>
</reference>
<reference key="8">
    <citation type="journal article" date="2014" name="J. Proteomics">
        <title>An enzyme assisted RP-RPLC approach for in-depth analysis of human liver phosphoproteome.</title>
        <authorList>
            <person name="Bian Y."/>
            <person name="Song C."/>
            <person name="Cheng K."/>
            <person name="Dong M."/>
            <person name="Wang F."/>
            <person name="Huang J."/>
            <person name="Sun D."/>
            <person name="Wang L."/>
            <person name="Ye M."/>
            <person name="Zou H."/>
        </authorList>
    </citation>
    <scope>IDENTIFICATION BY MASS SPECTROMETRY [LARGE SCALE ANALYSIS]</scope>
    <source>
        <tissue>Liver</tissue>
    </source>
</reference>
<reference key="9">
    <citation type="journal article" date="2014" name="EMBO Rep.">
        <title>UBL5 is essential for pre-mRNA splicing and sister chromatid cohesion in human cells.</title>
        <authorList>
            <person name="Oka Y."/>
            <person name="Varmark H."/>
            <person name="Vitting-Seerup K."/>
            <person name="Beli P."/>
            <person name="Waage J."/>
            <person name="Hakobyan A."/>
            <person name="Mistrik M."/>
            <person name="Choudhary C."/>
            <person name="Rohde M."/>
            <person name="Bekker-Jensen S."/>
            <person name="Mailand N."/>
        </authorList>
    </citation>
    <scope>FUNCTION</scope>
    <scope>SUBCELLULAR LOCATION</scope>
    <scope>MUTAGENESIS OF ASP-22</scope>
    <scope>INTERACTION WITH SART1 AND EFTUD2</scope>
</reference>
<reference key="10">
    <citation type="journal article" date="2015" name="EMBO J.">
        <title>Ubiquitin-like protein UBL5 promotes the functional integrity of the Fanconi anemia pathway.</title>
        <authorList>
            <person name="Oka Y."/>
            <person name="Bekker-Jensen S."/>
            <person name="Mailand N."/>
        </authorList>
    </citation>
    <scope>FUNCTION</scope>
    <scope>INTERACTION WITH FANCI</scope>
</reference>
<reference key="11">
    <citation type="journal article" date="2023" name="J. Biol. Chem.">
        <title>Ubiquitin-like protein 5 is a novel player in the UPR-PERK arm and ER stress-induced cell death.</title>
        <authorList>
            <person name="Wang W."/>
            <person name="Hawkridge A.M."/>
            <person name="Ma Y."/>
            <person name="Zhang B."/>
            <person name="Mangrum J.B."/>
            <person name="Hassan Z.H."/>
            <person name="He T."/>
            <person name="Blat S."/>
            <person name="Guo C."/>
            <person name="Zhou H."/>
            <person name="Liu J."/>
            <person name="Wang X.Y."/>
            <person name="Fang X."/>
        </authorList>
    </citation>
    <scope>FUNCTION</scope>
    <scope>SUBCELLULAR LOCATION</scope>
    <scope>DEPLETION DURING ER STRESS-INDUCED CELL DEATH</scope>
</reference>
<reference key="12">
    <citation type="journal article" date="2003" name="Protein Sci.">
        <title>Structural analysis of UBL5, a novel ubiquitin-like modifier.</title>
        <authorList>
            <person name="McNally T."/>
            <person name="Huang Q."/>
            <person name="Janis R.S."/>
            <person name="Liu Z."/>
            <person name="Olejniczak E.T."/>
            <person name="Reilly R.M."/>
        </authorList>
    </citation>
    <scope>STRUCTURE BY NMR</scope>
    <scope>INTERACTION WITH CLK4</scope>
</reference>
<evidence type="ECO:0000269" key="1">
    <source>
    </source>
</evidence>
<evidence type="ECO:0000269" key="2">
    <source>
    </source>
</evidence>
<evidence type="ECO:0000269" key="3">
    <source>
    </source>
</evidence>
<evidence type="ECO:0000269" key="4">
    <source>
    </source>
</evidence>
<evidence type="ECO:0000269" key="5">
    <source>
    </source>
</evidence>
<evidence type="ECO:0000269" key="6">
    <source>
    </source>
</evidence>
<evidence type="ECO:0000269" key="7">
    <source>
    </source>
</evidence>
<evidence type="ECO:0007829" key="8">
    <source>
        <dbReference type="PDB" id="4PYU"/>
    </source>
</evidence>
<evidence type="ECO:0007829" key="9">
    <source>
        <dbReference type="PDB" id="8Q7N"/>
    </source>
</evidence>